<keyword id="KW-0210">Decarboxylase</keyword>
<keyword id="KW-0456">Lyase</keyword>
<keyword id="KW-0665">Pyrimidine biosynthesis</keyword>
<name>PYRF_BORPD</name>
<comment type="catalytic activity">
    <reaction evidence="1">
        <text>orotidine 5'-phosphate + H(+) = UMP + CO2</text>
        <dbReference type="Rhea" id="RHEA:11596"/>
        <dbReference type="ChEBI" id="CHEBI:15378"/>
        <dbReference type="ChEBI" id="CHEBI:16526"/>
        <dbReference type="ChEBI" id="CHEBI:57538"/>
        <dbReference type="ChEBI" id="CHEBI:57865"/>
        <dbReference type="EC" id="4.1.1.23"/>
    </reaction>
</comment>
<comment type="pathway">
    <text evidence="1">Pyrimidine metabolism; UMP biosynthesis via de novo pathway; UMP from orotate: step 2/2.</text>
</comment>
<comment type="similarity">
    <text evidence="1">Belongs to the OMP decarboxylase family. Type 2 subfamily.</text>
</comment>
<feature type="chain" id="PRO_1000138947" description="Orotidine 5'-phosphate decarboxylase">
    <location>
        <begin position="1"/>
        <end position="272"/>
    </location>
</feature>
<feature type="active site" description="Proton donor" evidence="1">
    <location>
        <position position="95"/>
    </location>
</feature>
<dbReference type="EC" id="4.1.1.23" evidence="1"/>
<dbReference type="EMBL" id="AM902716">
    <property type="protein sequence ID" value="CAP44298.1"/>
    <property type="molecule type" value="Genomic_DNA"/>
</dbReference>
<dbReference type="SMR" id="A9I6E7"/>
<dbReference type="STRING" id="94624.Bpet3952"/>
<dbReference type="KEGG" id="bpt:Bpet3952"/>
<dbReference type="eggNOG" id="COG0284">
    <property type="taxonomic scope" value="Bacteria"/>
</dbReference>
<dbReference type="UniPathway" id="UPA00070">
    <property type="reaction ID" value="UER00120"/>
</dbReference>
<dbReference type="Proteomes" id="UP000001225">
    <property type="component" value="Chromosome"/>
</dbReference>
<dbReference type="GO" id="GO:0004590">
    <property type="term" value="F:orotidine-5'-phosphate decarboxylase activity"/>
    <property type="evidence" value="ECO:0007669"/>
    <property type="project" value="UniProtKB-UniRule"/>
</dbReference>
<dbReference type="GO" id="GO:0006207">
    <property type="term" value="P:'de novo' pyrimidine nucleobase biosynthetic process"/>
    <property type="evidence" value="ECO:0007669"/>
    <property type="project" value="InterPro"/>
</dbReference>
<dbReference type="GO" id="GO:0044205">
    <property type="term" value="P:'de novo' UMP biosynthetic process"/>
    <property type="evidence" value="ECO:0007669"/>
    <property type="project" value="UniProtKB-UniRule"/>
</dbReference>
<dbReference type="CDD" id="cd04725">
    <property type="entry name" value="OMP_decarboxylase_like"/>
    <property type="match status" value="1"/>
</dbReference>
<dbReference type="Gene3D" id="3.20.20.70">
    <property type="entry name" value="Aldolase class I"/>
    <property type="match status" value="1"/>
</dbReference>
<dbReference type="HAMAP" id="MF_01215">
    <property type="entry name" value="OMPdecase_type2"/>
    <property type="match status" value="1"/>
</dbReference>
<dbReference type="InterPro" id="IPR013785">
    <property type="entry name" value="Aldolase_TIM"/>
</dbReference>
<dbReference type="InterPro" id="IPR018089">
    <property type="entry name" value="OMPdecase_AS"/>
</dbReference>
<dbReference type="InterPro" id="IPR011995">
    <property type="entry name" value="OMPdecase_type-2"/>
</dbReference>
<dbReference type="InterPro" id="IPR001754">
    <property type="entry name" value="OMPdeCOase_dom"/>
</dbReference>
<dbReference type="InterPro" id="IPR011060">
    <property type="entry name" value="RibuloseP-bd_barrel"/>
</dbReference>
<dbReference type="NCBIfam" id="TIGR02127">
    <property type="entry name" value="pyrF_sub2"/>
    <property type="match status" value="1"/>
</dbReference>
<dbReference type="PANTHER" id="PTHR43375">
    <property type="entry name" value="OROTIDINE 5'-PHOSPHATE DECARBOXYLASE"/>
    <property type="match status" value="1"/>
</dbReference>
<dbReference type="PANTHER" id="PTHR43375:SF1">
    <property type="entry name" value="OROTIDINE 5'-PHOSPHATE DECARBOXYLASE"/>
    <property type="match status" value="1"/>
</dbReference>
<dbReference type="Pfam" id="PF00215">
    <property type="entry name" value="OMPdecase"/>
    <property type="match status" value="1"/>
</dbReference>
<dbReference type="SMART" id="SM00934">
    <property type="entry name" value="OMPdecase"/>
    <property type="match status" value="1"/>
</dbReference>
<dbReference type="SUPFAM" id="SSF51366">
    <property type="entry name" value="Ribulose-phoshate binding barrel"/>
    <property type="match status" value="1"/>
</dbReference>
<dbReference type="PROSITE" id="PS00156">
    <property type="entry name" value="OMPDECASE"/>
    <property type="match status" value="1"/>
</dbReference>
<organism>
    <name type="scientific">Bordetella petrii (strain ATCC BAA-461 / DSM 12804 / CCUG 43448)</name>
    <dbReference type="NCBI Taxonomy" id="340100"/>
    <lineage>
        <taxon>Bacteria</taxon>
        <taxon>Pseudomonadati</taxon>
        <taxon>Pseudomonadota</taxon>
        <taxon>Betaproteobacteria</taxon>
        <taxon>Burkholderiales</taxon>
        <taxon>Alcaligenaceae</taxon>
        <taxon>Bordetella</taxon>
    </lineage>
</organism>
<evidence type="ECO:0000255" key="1">
    <source>
        <dbReference type="HAMAP-Rule" id="MF_01215"/>
    </source>
</evidence>
<proteinExistence type="inferred from homology"/>
<sequence length="272" mass="29343">MTFIQQLEHAWAAGNTLLQVGLDPDPQRFPRELEGKPDAIFQFCREIVDATAPYACSFKPQIAYFAAHRAEDQLEALCAHIRAAHPHLPIVLDAKRGDIGTTAEHYAREAYERYGAHAMTVNPYMGLDSVEPYLGWKDRGVIVLCRTSNPGGSDLQFLKLDNGEPLYLHVAGMVADKWNADGQCGLVVGATFPNELAAVRQRIGDAMPLLVPGIGAQGGDVTATVNAGRNAAGTGMMINSSRAILYASGGDDWRQAAADAARDLRDAINGVR</sequence>
<protein>
    <recommendedName>
        <fullName evidence="1">Orotidine 5'-phosphate decarboxylase</fullName>
        <ecNumber evidence="1">4.1.1.23</ecNumber>
    </recommendedName>
    <alternativeName>
        <fullName evidence="1">OMP decarboxylase</fullName>
        <shortName evidence="1">OMPDCase</shortName>
        <shortName evidence="1">OMPdecase</shortName>
    </alternativeName>
</protein>
<gene>
    <name evidence="1" type="primary">pyrF</name>
    <name type="ordered locus">Bpet3952</name>
</gene>
<accession>A9I6E7</accession>
<reference key="1">
    <citation type="journal article" date="2008" name="BMC Genomics">
        <title>The missing link: Bordetella petrii is endowed with both the metabolic versatility of environmental bacteria and virulence traits of pathogenic Bordetellae.</title>
        <authorList>
            <person name="Gross R."/>
            <person name="Guzman C.A."/>
            <person name="Sebaihia M."/>
            <person name="Martin dos Santos V.A.P."/>
            <person name="Pieper D.H."/>
            <person name="Koebnik R."/>
            <person name="Lechner M."/>
            <person name="Bartels D."/>
            <person name="Buhrmester J."/>
            <person name="Choudhuri J.V."/>
            <person name="Ebensen T."/>
            <person name="Gaigalat L."/>
            <person name="Herrmann S."/>
            <person name="Khachane A.N."/>
            <person name="Larisch C."/>
            <person name="Link S."/>
            <person name="Linke B."/>
            <person name="Meyer F."/>
            <person name="Mormann S."/>
            <person name="Nakunst D."/>
            <person name="Rueckert C."/>
            <person name="Schneiker-Bekel S."/>
            <person name="Schulze K."/>
            <person name="Voerholter F.-J."/>
            <person name="Yevsa T."/>
            <person name="Engle J.T."/>
            <person name="Goldman W.E."/>
            <person name="Puehler A."/>
            <person name="Goebel U.B."/>
            <person name="Goesmann A."/>
            <person name="Bloecker H."/>
            <person name="Kaiser O."/>
            <person name="Martinez-Arias R."/>
        </authorList>
    </citation>
    <scope>NUCLEOTIDE SEQUENCE [LARGE SCALE GENOMIC DNA]</scope>
    <source>
        <strain>ATCC BAA-461 / DSM 12804 / CCUG 43448</strain>
    </source>
</reference>